<dbReference type="EMBL" id="AY835431">
    <property type="protein sequence ID" value="AAV80648.1"/>
    <property type="molecule type" value="Genomic_DNA"/>
</dbReference>
<dbReference type="RefSeq" id="YP_636226.1">
    <property type="nucleotide sequence ID" value="NC_008114.1"/>
</dbReference>
<dbReference type="SMR" id="Q3ZJ41"/>
<dbReference type="GeneID" id="4108722"/>
<dbReference type="GO" id="GO:0009507">
    <property type="term" value="C:chloroplast"/>
    <property type="evidence" value="ECO:0007669"/>
    <property type="project" value="UniProtKB-SubCell"/>
</dbReference>
<dbReference type="GO" id="GO:1990904">
    <property type="term" value="C:ribonucleoprotein complex"/>
    <property type="evidence" value="ECO:0007669"/>
    <property type="project" value="UniProtKB-KW"/>
</dbReference>
<dbReference type="GO" id="GO:0005840">
    <property type="term" value="C:ribosome"/>
    <property type="evidence" value="ECO:0007669"/>
    <property type="project" value="UniProtKB-KW"/>
</dbReference>
<dbReference type="GO" id="GO:0003729">
    <property type="term" value="F:mRNA binding"/>
    <property type="evidence" value="ECO:0007669"/>
    <property type="project" value="TreeGrafter"/>
</dbReference>
<dbReference type="GO" id="GO:0003735">
    <property type="term" value="F:structural constituent of ribosome"/>
    <property type="evidence" value="ECO:0007669"/>
    <property type="project" value="InterPro"/>
</dbReference>
<dbReference type="GO" id="GO:0006412">
    <property type="term" value="P:translation"/>
    <property type="evidence" value="ECO:0007669"/>
    <property type="project" value="UniProtKB-UniRule"/>
</dbReference>
<dbReference type="CDD" id="cd00387">
    <property type="entry name" value="Ribosomal_L7_L12"/>
    <property type="match status" value="1"/>
</dbReference>
<dbReference type="FunFam" id="3.30.1390.10:FF:000001">
    <property type="entry name" value="50S ribosomal protein L7/L12"/>
    <property type="match status" value="1"/>
</dbReference>
<dbReference type="Gene3D" id="3.30.1390.10">
    <property type="match status" value="1"/>
</dbReference>
<dbReference type="Gene3D" id="1.20.5.710">
    <property type="entry name" value="Single helix bin"/>
    <property type="match status" value="1"/>
</dbReference>
<dbReference type="HAMAP" id="MF_00368">
    <property type="entry name" value="Ribosomal_bL12"/>
    <property type="match status" value="1"/>
</dbReference>
<dbReference type="InterPro" id="IPR000206">
    <property type="entry name" value="Ribosomal_bL12"/>
</dbReference>
<dbReference type="InterPro" id="IPR013823">
    <property type="entry name" value="Ribosomal_bL12_C"/>
</dbReference>
<dbReference type="InterPro" id="IPR014719">
    <property type="entry name" value="Ribosomal_bL12_C/ClpS-like"/>
</dbReference>
<dbReference type="InterPro" id="IPR008932">
    <property type="entry name" value="Ribosomal_bL12_oligo"/>
</dbReference>
<dbReference type="InterPro" id="IPR036235">
    <property type="entry name" value="Ribosomal_bL12_oligo_N_sf"/>
</dbReference>
<dbReference type="NCBIfam" id="TIGR00855">
    <property type="entry name" value="L12"/>
    <property type="match status" value="1"/>
</dbReference>
<dbReference type="PANTHER" id="PTHR45987">
    <property type="entry name" value="39S RIBOSOMAL PROTEIN L12"/>
    <property type="match status" value="1"/>
</dbReference>
<dbReference type="PANTHER" id="PTHR45987:SF4">
    <property type="entry name" value="LARGE RIBOSOMAL SUBUNIT PROTEIN BL12M"/>
    <property type="match status" value="1"/>
</dbReference>
<dbReference type="Pfam" id="PF00542">
    <property type="entry name" value="Ribosomal_L12"/>
    <property type="match status" value="1"/>
</dbReference>
<dbReference type="Pfam" id="PF16320">
    <property type="entry name" value="Ribosomal_L12_N"/>
    <property type="match status" value="1"/>
</dbReference>
<dbReference type="SUPFAM" id="SSF54736">
    <property type="entry name" value="ClpS-like"/>
    <property type="match status" value="1"/>
</dbReference>
<dbReference type="SUPFAM" id="SSF48300">
    <property type="entry name" value="Ribosomal protein L7/12, oligomerisation (N-terminal) domain"/>
    <property type="match status" value="1"/>
</dbReference>
<reference key="1">
    <citation type="journal article" date="2005" name="Mol. Biol. Evol.">
        <title>The chloroplast genome sequence of the green alga Pseudendoclonium akinetum (Ulvophyceae) reveals unusual structural features and new insights into the branching order of chlorophyte lineages.</title>
        <authorList>
            <person name="Pombert J.-F."/>
            <person name="Otis C."/>
            <person name="Lemieux C."/>
            <person name="Turmel M."/>
        </authorList>
    </citation>
    <scope>NUCLEOTIDE SEQUENCE [LARGE SCALE GENOMIC DNA]</scope>
    <source>
        <strain>UTEX 1912</strain>
    </source>
</reference>
<name>RK12_TUPAK</name>
<geneLocation type="chloroplast"/>
<protein>
    <recommendedName>
        <fullName evidence="1">Large ribosomal subunit protein bL12c</fullName>
    </recommendedName>
    <alternativeName>
        <fullName evidence="2">50S ribosomal protein L12, chloroplastic</fullName>
    </alternativeName>
</protein>
<keyword id="KW-0150">Chloroplast</keyword>
<keyword id="KW-0934">Plastid</keyword>
<keyword id="KW-0687">Ribonucleoprotein</keyword>
<keyword id="KW-0689">Ribosomal protein</keyword>
<accession>Q3ZJ41</accession>
<comment type="function">
    <text evidence="1">Forms part of the ribosomal stalk which helps the ribosome interact with GTP-bound translation factors. Is thus essential for accurate translation.</text>
</comment>
<comment type="subunit">
    <text evidence="1">Homodimer. Part of the ribosomal stalk of the 50S ribosomal subunit. Forms a multimeric L10(L12)X complex, where L10 forms an elongated spine to which 2 to 4 L12 dimers bind in a sequential fashion. Binds GTP-bound translation factors.</text>
</comment>
<comment type="subcellular location">
    <subcellularLocation>
        <location>Plastid</location>
        <location>Chloroplast</location>
    </subcellularLocation>
</comment>
<comment type="similarity">
    <text evidence="1">Belongs to the bacterial ribosomal protein bL12 family.</text>
</comment>
<gene>
    <name evidence="1" type="primary">rpl12</name>
</gene>
<organism>
    <name type="scientific">Tupiella akineta</name>
    <name type="common">Green alga</name>
    <name type="synonym">Pseudendoclonium akinetum</name>
    <dbReference type="NCBI Taxonomy" id="160070"/>
    <lineage>
        <taxon>Eukaryota</taxon>
        <taxon>Viridiplantae</taxon>
        <taxon>Chlorophyta</taxon>
        <taxon>Ulvophyceae</taxon>
        <taxon>OUU clade</taxon>
        <taxon>Ulotrichales</taxon>
        <taxon>Tupiellaceae</taxon>
        <taxon>Tupiella</taxon>
    </lineage>
</organism>
<evidence type="ECO:0000255" key="1">
    <source>
        <dbReference type="HAMAP-Rule" id="MF_00368"/>
    </source>
</evidence>
<evidence type="ECO:0000305" key="2"/>
<proteinExistence type="inferred from homology"/>
<feature type="chain" id="PRO_0000276329" description="Large ribosomal subunit protein bL12c">
    <location>
        <begin position="1"/>
        <end position="129"/>
    </location>
</feature>
<sequence length="129" mass="13757">MTTVEQIIDQLKTLTLIESSELVKQIEETFGVDASAPVGGAIMMAPGQESAGQEVVEEKTTFDVIVKDIASDKRVSVLKVIRKLTSLGLAEAKEFTVSLPKALKEGISKEEAAEAKKDLELAGAVVDIV</sequence>